<accession>P46948</accession>
<accession>D6VUX7</accession>
<proteinExistence type="evidence at protein level"/>
<feature type="chain" id="PRO_0000139962" description="Exosome complex component SKI6">
    <location>
        <begin position="1"/>
        <end position="246"/>
    </location>
</feature>
<feature type="mutagenesis site" description="Impairs RNA-binding (at the proposed ring entry site)." evidence="5">
    <original>KS</original>
    <variation>ED</variation>
    <location>
        <begin position="62"/>
        <end position="63"/>
    </location>
</feature>
<feature type="mutagenesis site" description="Impairs RNA-binding (at the proposed ring exit site)." evidence="5">
    <original>RR</original>
    <variation>EE</variation>
    <location>
        <begin position="95"/>
        <end position="96"/>
    </location>
</feature>
<feature type="strand" evidence="9">
    <location>
        <begin position="14"/>
        <end position="16"/>
    </location>
</feature>
<feature type="strand" evidence="10">
    <location>
        <begin position="25"/>
        <end position="31"/>
    </location>
</feature>
<feature type="turn" evidence="10">
    <location>
        <begin position="33"/>
        <end position="35"/>
    </location>
</feature>
<feature type="strand" evidence="10">
    <location>
        <begin position="37"/>
        <end position="44"/>
    </location>
</feature>
<feature type="strand" evidence="10">
    <location>
        <begin position="47"/>
        <end position="57"/>
    </location>
</feature>
<feature type="strand" evidence="10">
    <location>
        <begin position="60"/>
        <end position="64"/>
    </location>
</feature>
<feature type="strand" evidence="10">
    <location>
        <begin position="67"/>
        <end position="69"/>
    </location>
</feature>
<feature type="strand" evidence="10">
    <location>
        <begin position="71"/>
        <end position="78"/>
    </location>
</feature>
<feature type="strand" evidence="10">
    <location>
        <begin position="82"/>
        <end position="85"/>
    </location>
</feature>
<feature type="helix" evidence="10">
    <location>
        <begin position="95"/>
        <end position="108"/>
    </location>
</feature>
<feature type="turn" evidence="10">
    <location>
        <begin position="109"/>
        <end position="111"/>
    </location>
</feature>
<feature type="helix" evidence="10">
    <location>
        <begin position="114"/>
        <end position="116"/>
    </location>
</feature>
<feature type="strand" evidence="10">
    <location>
        <begin position="121"/>
        <end position="130"/>
    </location>
</feature>
<feature type="helix" evidence="10">
    <location>
        <begin position="135"/>
        <end position="149"/>
    </location>
</feature>
<feature type="strand" evidence="10">
    <location>
        <begin position="154"/>
        <end position="156"/>
    </location>
</feature>
<feature type="strand" evidence="10">
    <location>
        <begin position="158"/>
        <end position="166"/>
    </location>
</feature>
<feature type="strand" evidence="10">
    <location>
        <begin position="169"/>
        <end position="173"/>
    </location>
</feature>
<feature type="helix" evidence="10">
    <location>
        <begin position="176"/>
        <end position="179"/>
    </location>
</feature>
<feature type="strand" evidence="10">
    <location>
        <begin position="182"/>
        <end position="190"/>
    </location>
</feature>
<feature type="strand" evidence="10">
    <location>
        <begin position="193"/>
        <end position="201"/>
    </location>
</feature>
<feature type="helix" evidence="10">
    <location>
        <begin position="207"/>
        <end position="209"/>
    </location>
</feature>
<feature type="helix" evidence="10">
    <location>
        <begin position="210"/>
        <end position="241"/>
    </location>
</feature>
<protein>
    <recommendedName>
        <fullName>Exosome complex component SKI6</fullName>
    </recommendedName>
    <alternativeName>
        <fullName>Extracellular mutant protein 20</fullName>
    </alternativeName>
    <alternativeName>
        <fullName>Ribosomal RNA-processing protein 41</fullName>
    </alternativeName>
    <alternativeName>
        <fullName>Superkiller protein 6</fullName>
    </alternativeName>
</protein>
<organism>
    <name type="scientific">Saccharomyces cerevisiae (strain ATCC 204508 / S288c)</name>
    <name type="common">Baker's yeast</name>
    <dbReference type="NCBI Taxonomy" id="559292"/>
    <lineage>
        <taxon>Eukaryota</taxon>
        <taxon>Fungi</taxon>
        <taxon>Dikarya</taxon>
        <taxon>Ascomycota</taxon>
        <taxon>Saccharomycotina</taxon>
        <taxon>Saccharomycetes</taxon>
        <taxon>Saccharomycetales</taxon>
        <taxon>Saccharomycetaceae</taxon>
        <taxon>Saccharomyces</taxon>
    </lineage>
</organism>
<gene>
    <name type="primary">SKI6</name>
    <name type="synonym">ECM20</name>
    <name type="synonym">RRP41</name>
    <name type="ordered locus">YGR195W</name>
    <name type="ORF">G7587</name>
</gene>
<dbReference type="EMBL" id="X82775">
    <property type="protein sequence ID" value="CAA58018.1"/>
    <property type="molecule type" value="Genomic_DNA"/>
</dbReference>
<dbReference type="EMBL" id="Z72980">
    <property type="protein sequence ID" value="CAA97221.1"/>
    <property type="molecule type" value="Genomic_DNA"/>
</dbReference>
<dbReference type="EMBL" id="Z72981">
    <property type="protein sequence ID" value="CAA97223.1"/>
    <property type="molecule type" value="Genomic_DNA"/>
</dbReference>
<dbReference type="EMBL" id="AY558509">
    <property type="protein sequence ID" value="AAS56835.1"/>
    <property type="molecule type" value="Genomic_DNA"/>
</dbReference>
<dbReference type="EMBL" id="BK006941">
    <property type="protein sequence ID" value="DAA08288.1"/>
    <property type="molecule type" value="Genomic_DNA"/>
</dbReference>
<dbReference type="PIR" id="S59180">
    <property type="entry name" value="S59180"/>
</dbReference>
<dbReference type="RefSeq" id="NP_011711.3">
    <property type="nucleotide sequence ID" value="NM_001181324.3"/>
</dbReference>
<dbReference type="PDB" id="2WP8">
    <property type="method" value="X-ray"/>
    <property type="resolution" value="3.00 A"/>
    <property type="chains" value="B=1-246"/>
</dbReference>
<dbReference type="PDB" id="4IFD">
    <property type="method" value="X-ray"/>
    <property type="resolution" value="2.80 A"/>
    <property type="chains" value="B=1-246"/>
</dbReference>
<dbReference type="PDB" id="4OO1">
    <property type="method" value="X-ray"/>
    <property type="resolution" value="3.30 A"/>
    <property type="chains" value="B=1-246"/>
</dbReference>
<dbReference type="PDB" id="5C0W">
    <property type="method" value="X-ray"/>
    <property type="resolution" value="4.60 A"/>
    <property type="chains" value="B=1-246"/>
</dbReference>
<dbReference type="PDB" id="5C0X">
    <property type="method" value="X-ray"/>
    <property type="resolution" value="3.81 A"/>
    <property type="chains" value="B=1-246"/>
</dbReference>
<dbReference type="PDB" id="5G06">
    <property type="method" value="EM"/>
    <property type="resolution" value="4.20 A"/>
    <property type="chains" value="B=1-246"/>
</dbReference>
<dbReference type="PDB" id="5JEA">
    <property type="method" value="X-ray"/>
    <property type="resolution" value="2.65 A"/>
    <property type="chains" value="B=1-246"/>
</dbReference>
<dbReference type="PDB" id="5K36">
    <property type="method" value="X-ray"/>
    <property type="resolution" value="3.10 A"/>
    <property type="chains" value="B=1-246"/>
</dbReference>
<dbReference type="PDB" id="5OKZ">
    <property type="method" value="X-ray"/>
    <property type="resolution" value="3.20 A"/>
    <property type="chains" value="B/L/V/f=1-246"/>
</dbReference>
<dbReference type="PDB" id="5VZJ">
    <property type="method" value="X-ray"/>
    <property type="resolution" value="3.30 A"/>
    <property type="chains" value="B=1-246"/>
</dbReference>
<dbReference type="PDB" id="6FSZ">
    <property type="method" value="EM"/>
    <property type="resolution" value="4.60 A"/>
    <property type="chains" value="BB=1-246"/>
</dbReference>
<dbReference type="PDB" id="6LQS">
    <property type="method" value="EM"/>
    <property type="resolution" value="3.80 A"/>
    <property type="chains" value="R1=1-246"/>
</dbReference>
<dbReference type="PDB" id="7AJT">
    <property type="method" value="EM"/>
    <property type="resolution" value="4.60 A"/>
    <property type="chains" value="EC=1-246"/>
</dbReference>
<dbReference type="PDB" id="7AJU">
    <property type="method" value="EM"/>
    <property type="resolution" value="3.80 A"/>
    <property type="chains" value="EC=1-246"/>
</dbReference>
<dbReference type="PDB" id="7D4I">
    <property type="method" value="EM"/>
    <property type="resolution" value="4.00 A"/>
    <property type="chains" value="R1=1-246"/>
</dbReference>
<dbReference type="PDB" id="8QCF">
    <property type="method" value="EM"/>
    <property type="resolution" value="2.55 A"/>
    <property type="chains" value="C=1-246"/>
</dbReference>
<dbReference type="PDBsum" id="2WP8"/>
<dbReference type="PDBsum" id="4IFD"/>
<dbReference type="PDBsum" id="4OO1"/>
<dbReference type="PDBsum" id="5C0W"/>
<dbReference type="PDBsum" id="5C0X"/>
<dbReference type="PDBsum" id="5G06"/>
<dbReference type="PDBsum" id="5JEA"/>
<dbReference type="PDBsum" id="5K36"/>
<dbReference type="PDBsum" id="5OKZ"/>
<dbReference type="PDBsum" id="5VZJ"/>
<dbReference type="PDBsum" id="6FSZ"/>
<dbReference type="PDBsum" id="6LQS"/>
<dbReference type="PDBsum" id="7AJT"/>
<dbReference type="PDBsum" id="7AJU"/>
<dbReference type="PDBsum" id="7D4I"/>
<dbReference type="PDBsum" id="8QCF"/>
<dbReference type="EMDB" id="EMD-0952"/>
<dbReference type="EMDB" id="EMD-11807"/>
<dbReference type="EMDB" id="EMD-11808"/>
<dbReference type="EMDB" id="EMD-18329"/>
<dbReference type="EMDB" id="EMD-30574"/>
<dbReference type="EMDB" id="EMD-4301"/>
<dbReference type="SMR" id="P46948"/>
<dbReference type="BioGRID" id="33448">
    <property type="interactions" value="325"/>
</dbReference>
<dbReference type="ComplexPortal" id="CPX-599">
    <property type="entry name" value="Nuclear/nucleolar exosome complex, DIS3-RRP6 variant"/>
</dbReference>
<dbReference type="ComplexPortal" id="CPX-603">
    <property type="entry name" value="Cytoplasmic exosome complex, DIS3 variant"/>
</dbReference>
<dbReference type="DIP" id="DIP-2083N"/>
<dbReference type="FunCoup" id="P46948">
    <property type="interactions" value="1063"/>
</dbReference>
<dbReference type="IntAct" id="P46948">
    <property type="interactions" value="71"/>
</dbReference>
<dbReference type="MINT" id="P46948"/>
<dbReference type="STRING" id="4932.YGR195W"/>
<dbReference type="iPTMnet" id="P46948"/>
<dbReference type="PaxDb" id="4932-YGR195W"/>
<dbReference type="PeptideAtlas" id="P46948"/>
<dbReference type="TopDownProteomics" id="P46948"/>
<dbReference type="EnsemblFungi" id="YGR195W_mRNA">
    <property type="protein sequence ID" value="YGR195W"/>
    <property type="gene ID" value="YGR195W"/>
</dbReference>
<dbReference type="GeneID" id="853109"/>
<dbReference type="KEGG" id="sce:YGR195W"/>
<dbReference type="AGR" id="SGD:S000003427"/>
<dbReference type="SGD" id="S000003427">
    <property type="gene designation" value="SKI6"/>
</dbReference>
<dbReference type="VEuPathDB" id="FungiDB:YGR195W"/>
<dbReference type="eggNOG" id="KOG1068">
    <property type="taxonomic scope" value="Eukaryota"/>
</dbReference>
<dbReference type="GeneTree" id="ENSGT00940000153348"/>
<dbReference type="HOGENOM" id="CLU_063514_0_1_1"/>
<dbReference type="InParanoid" id="P46948"/>
<dbReference type="OMA" id="ECRINTH"/>
<dbReference type="OrthoDB" id="437922at2759"/>
<dbReference type="BioCyc" id="YEAST:G3O-30881-MONOMER"/>
<dbReference type="Reactome" id="R-SCE-429958">
    <property type="pathway name" value="mRNA decay by 3' to 5' exoribonuclease"/>
</dbReference>
<dbReference type="Reactome" id="R-SCE-450385">
    <property type="pathway name" value="Butyrate Response Factor 1 (BRF1) binds and destabilizes mRNA"/>
</dbReference>
<dbReference type="Reactome" id="R-SCE-450513">
    <property type="pathway name" value="Tristetraprolin (TTP, ZFP36) binds and destabilizes mRNA"/>
</dbReference>
<dbReference type="Reactome" id="R-SCE-6791226">
    <property type="pathway name" value="Major pathway of rRNA processing in the nucleolus and cytosol"/>
</dbReference>
<dbReference type="BioGRID-ORCS" id="853109">
    <property type="hits" value="2 hits in 10 CRISPR screens"/>
</dbReference>
<dbReference type="CD-CODE" id="BDAE0F88">
    <property type="entry name" value="Nucleolus"/>
</dbReference>
<dbReference type="EvolutionaryTrace" id="P46948"/>
<dbReference type="PRO" id="PR:P46948"/>
<dbReference type="Proteomes" id="UP000002311">
    <property type="component" value="Chromosome VII"/>
</dbReference>
<dbReference type="RNAct" id="P46948">
    <property type="molecule type" value="protein"/>
</dbReference>
<dbReference type="GO" id="GO:0000177">
    <property type="term" value="C:cytoplasmic exosome (RNase complex)"/>
    <property type="evidence" value="ECO:0000314"/>
    <property type="project" value="SGD"/>
</dbReference>
<dbReference type="GO" id="GO:0000178">
    <property type="term" value="C:exosome (RNase complex)"/>
    <property type="evidence" value="ECO:0000353"/>
    <property type="project" value="ComplexPortal"/>
</dbReference>
<dbReference type="GO" id="GO:0000176">
    <property type="term" value="C:nuclear exosome (RNase complex)"/>
    <property type="evidence" value="ECO:0000314"/>
    <property type="project" value="SGD"/>
</dbReference>
<dbReference type="GO" id="GO:0005730">
    <property type="term" value="C:nucleolus"/>
    <property type="evidence" value="ECO:0000314"/>
    <property type="project" value="SGD"/>
</dbReference>
<dbReference type="GO" id="GO:0005634">
    <property type="term" value="C:nucleus"/>
    <property type="evidence" value="ECO:0000314"/>
    <property type="project" value="ComplexPortal"/>
</dbReference>
<dbReference type="GO" id="GO:0003723">
    <property type="term" value="F:RNA binding"/>
    <property type="evidence" value="ECO:0000318"/>
    <property type="project" value="GO_Central"/>
</dbReference>
<dbReference type="GO" id="GO:0000467">
    <property type="term" value="P:exonucleolytic trimming to generate mature 3'-end of 5.8S rRNA from tricistronic rRNA transcript (SSU-rRNA, 5.8S rRNA, LSU-rRNA)"/>
    <property type="evidence" value="ECO:0000315"/>
    <property type="project" value="SGD"/>
</dbReference>
<dbReference type="GO" id="GO:0071028">
    <property type="term" value="P:nuclear mRNA surveillance"/>
    <property type="evidence" value="ECO:0000315"/>
    <property type="project" value="SGD"/>
</dbReference>
<dbReference type="GO" id="GO:0071039">
    <property type="term" value="P:nuclear polyadenylation-dependent CUT catabolic process"/>
    <property type="evidence" value="ECO:0000315"/>
    <property type="project" value="SGD"/>
</dbReference>
<dbReference type="GO" id="GO:0000956">
    <property type="term" value="P:nuclear-transcribed mRNA catabolic process"/>
    <property type="evidence" value="ECO:0000315"/>
    <property type="project" value="SGD"/>
</dbReference>
<dbReference type="GO" id="GO:0070478">
    <property type="term" value="P:nuclear-transcribed mRNA catabolic process, 3'-5' exonucleolytic nonsense-mediated decay"/>
    <property type="evidence" value="ECO:0000315"/>
    <property type="project" value="SGD"/>
</dbReference>
<dbReference type="GO" id="GO:0071051">
    <property type="term" value="P:poly(A)-dependent snoRNA 3'-end processing"/>
    <property type="evidence" value="ECO:0000315"/>
    <property type="project" value="SGD"/>
</dbReference>
<dbReference type="GO" id="GO:0006401">
    <property type="term" value="P:RNA catabolic process"/>
    <property type="evidence" value="ECO:0000314"/>
    <property type="project" value="ComplexPortal"/>
</dbReference>
<dbReference type="GO" id="GO:0006396">
    <property type="term" value="P:RNA processing"/>
    <property type="evidence" value="ECO:0000314"/>
    <property type="project" value="ComplexPortal"/>
</dbReference>
<dbReference type="GO" id="GO:0016075">
    <property type="term" value="P:rRNA catabolic process"/>
    <property type="evidence" value="ECO:0000315"/>
    <property type="project" value="SGD"/>
</dbReference>
<dbReference type="GO" id="GO:0071038">
    <property type="term" value="P:TRAMP-dependent tRNA surveillance pathway"/>
    <property type="evidence" value="ECO:0000314"/>
    <property type="project" value="SGD"/>
</dbReference>
<dbReference type="GO" id="GO:0034473">
    <property type="term" value="P:U1 snRNA 3'-end processing"/>
    <property type="evidence" value="ECO:0000315"/>
    <property type="project" value="SGD"/>
</dbReference>
<dbReference type="GO" id="GO:0034475">
    <property type="term" value="P:U4 snRNA 3'-end processing"/>
    <property type="evidence" value="ECO:0000315"/>
    <property type="project" value="SGD"/>
</dbReference>
<dbReference type="GO" id="GO:0034476">
    <property type="term" value="P:U5 snRNA 3'-end processing"/>
    <property type="evidence" value="ECO:0000315"/>
    <property type="project" value="SGD"/>
</dbReference>
<dbReference type="CDD" id="cd11370">
    <property type="entry name" value="RNase_PH_RRP41"/>
    <property type="match status" value="1"/>
</dbReference>
<dbReference type="FunFam" id="3.30.230.70:FF:000004">
    <property type="entry name" value="Exosome complex component Rrp41"/>
    <property type="match status" value="1"/>
</dbReference>
<dbReference type="Gene3D" id="3.30.230.70">
    <property type="entry name" value="GHMP Kinase, N-terminal domain"/>
    <property type="match status" value="1"/>
</dbReference>
<dbReference type="InterPro" id="IPR001247">
    <property type="entry name" value="ExoRNase_PH_dom1"/>
</dbReference>
<dbReference type="InterPro" id="IPR015847">
    <property type="entry name" value="ExoRNase_PH_dom2"/>
</dbReference>
<dbReference type="InterPro" id="IPR036345">
    <property type="entry name" value="ExoRNase_PH_dom2_sf"/>
</dbReference>
<dbReference type="InterPro" id="IPR027408">
    <property type="entry name" value="PNPase/RNase_PH_dom_sf"/>
</dbReference>
<dbReference type="InterPro" id="IPR020568">
    <property type="entry name" value="Ribosomal_Su5_D2-typ_SF"/>
</dbReference>
<dbReference type="InterPro" id="IPR050080">
    <property type="entry name" value="RNase_PH"/>
</dbReference>
<dbReference type="PANTHER" id="PTHR11953">
    <property type="entry name" value="EXOSOME COMPLEX COMPONENT"/>
    <property type="match status" value="1"/>
</dbReference>
<dbReference type="PANTHER" id="PTHR11953:SF0">
    <property type="entry name" value="EXOSOME COMPLEX COMPONENT RRP41"/>
    <property type="match status" value="1"/>
</dbReference>
<dbReference type="Pfam" id="PF01138">
    <property type="entry name" value="RNase_PH"/>
    <property type="match status" value="1"/>
</dbReference>
<dbReference type="Pfam" id="PF03725">
    <property type="entry name" value="RNase_PH_C"/>
    <property type="match status" value="1"/>
</dbReference>
<dbReference type="SUPFAM" id="SSF55666">
    <property type="entry name" value="Ribonuclease PH domain 2-like"/>
    <property type="match status" value="1"/>
</dbReference>
<dbReference type="SUPFAM" id="SSF54211">
    <property type="entry name" value="Ribosomal protein S5 domain 2-like"/>
    <property type="match status" value="1"/>
</dbReference>
<sequence>MSRLEIYSPEGLRLDGRRWNELRRFESSINTHPHAADGSSYMEQGNNKIITLVKGPKEPRLKSQMDTSKALLNVSVNITKFSKFERSKSSHKNERRVLEIQTSLVRMFEKNVMLNIYPRTVIDIEIHVLEQDGGIMGSLINGITLALIDAGISMFDYISGISVGLYDTTPLLDTNSLEENAMSTVTLGVVGKSEKLSLLLVEDKIPLDRLENVLAIGIAGAHRVRDLMDEELRKHAQKRVSNASAR</sequence>
<comment type="function">
    <text evidence="4 6">Non-catalytic component of the RNA exosome complex which has 3'-&gt;5' exoribonuclease activity and participates in a multitude of cellular RNA processing and degradation events. In the nucleus, the RNA exosome complex is involved in proper maturation of stable RNA species such as rRNA, snRNA and snoRNA, in the elimination of RNA processing by-products and non-coding 'pervasive' transcripts, such as antisense RNA species and cryptic unstable transcripts (CUTs), and of mRNAs with processing defects, thereby limiting or excluding their export to the cytoplasm. In the cytoplasm, the RNA exosome complex is involved in general mRNA turnover and in RNA surveillance pathways, preventing translation of aberrant mRNAs. The catalytic inactive RNA exosome core complex of 9 subunits (Exo-9) is proposed to play a pivotal role in the binding and presentation of RNA for ribonucleolysis, and to serve as a scaffold for the association with catalytic subunits and accessory proteins or complexes. SKI6 is part of the hexameric ring of RNase PH domain-containing subunits proposed to form a central channel which threads RNA substrates for degradation.</text>
</comment>
<comment type="subunit">
    <text evidence="1 4 5 6">Component of the RNA exosome complex. Specifically part of the catalytically inactive RNA exosome core complex (Exo-9) which may associate with the catalytic subunits RRP6 and DIS3 in cytoplasmic- and nuclear-specific RNA exosome complex forms. Exo-9 is formed by a hexameric base ring of RNase PH domain-containing subunits and a cap ring consisting of CSL4, RRP4 and RRP40.</text>
</comment>
<comment type="interaction">
    <interactant intactId="EBI-1788">
        <id>P46948</id>
    </interactant>
    <interactant intactId="EBI-1731">
        <id>P53859</id>
        <label>CSL4</label>
    </interactant>
    <organismsDiffer>false</organismsDiffer>
    <experiments>18</experiments>
</comment>
<comment type="interaction">
    <interactant intactId="EBI-1788">
        <id>P46948</id>
    </interactant>
    <interactant intactId="EBI-1740">
        <id>Q08162</id>
        <label>DIS3</label>
    </interactant>
    <organismsDiffer>false</organismsDiffer>
    <experiments>10</experiments>
</comment>
<comment type="interaction">
    <interactant intactId="EBI-1788">
        <id>P46948</id>
    </interactant>
    <interactant intactId="EBI-1749">
        <id>P48240</id>
        <label>MTR3</label>
    </interactant>
    <organismsDiffer>false</organismsDiffer>
    <experiments>9</experiments>
</comment>
<comment type="interaction">
    <interactant intactId="EBI-1788">
        <id>P46948</id>
    </interactant>
    <interactant intactId="EBI-1757">
        <id>P38792</id>
        <label>RRP4</label>
    </interactant>
    <organismsDiffer>false</organismsDiffer>
    <experiments>5</experiments>
</comment>
<comment type="interaction">
    <interactant intactId="EBI-1788">
        <id>P46948</id>
    </interactant>
    <interactant intactId="EBI-1831">
        <id>Q08285</id>
        <label>RRP40</label>
    </interactant>
    <organismsDiffer>false</organismsDiffer>
    <experiments>5</experiments>
</comment>
<comment type="interaction">
    <interactant intactId="EBI-1788">
        <id>P46948</id>
    </interactant>
    <interactant intactId="EBI-1765">
        <id>Q12277</id>
        <label>RRP42</label>
    </interactant>
    <organismsDiffer>false</organismsDiffer>
    <experiments>5</experiments>
</comment>
<comment type="interaction">
    <interactant intactId="EBI-1788">
        <id>P46948</id>
    </interactant>
    <interactant intactId="EBI-1773">
        <id>P25359</id>
        <label>RRP43</label>
    </interactant>
    <organismsDiffer>false</organismsDiffer>
    <experiments>5</experiments>
</comment>
<comment type="interaction">
    <interactant intactId="EBI-1788">
        <id>P46948</id>
    </interactant>
    <interactant intactId="EBI-1810">
        <id>Q05636</id>
        <label>RRP45</label>
    </interactant>
    <organismsDiffer>false</organismsDiffer>
    <experiments>12</experiments>
</comment>
<comment type="interaction">
    <interactant intactId="EBI-1788">
        <id>P46948</id>
    </interactant>
    <interactant intactId="EBI-1842">
        <id>P53256</id>
        <label>RRP46</label>
    </interactant>
    <organismsDiffer>false</organismsDiffer>
    <experiments>7</experiments>
</comment>
<comment type="interaction">
    <interactant intactId="EBI-1788">
        <id>P46948</id>
    </interactant>
    <interactant intactId="EBI-1782">
        <id>Q12149</id>
        <label>RRP6</label>
    </interactant>
    <organismsDiffer>false</organismsDiffer>
    <experiments>4</experiments>
</comment>
<comment type="subcellular location">
    <subcellularLocation>
        <location evidence="2">Cytoplasm</location>
    </subcellularLocation>
    <subcellularLocation>
        <location evidence="2">Nucleus</location>
        <location evidence="2">Nucleolus</location>
    </subcellularLocation>
</comment>
<comment type="miscellaneous">
    <text evidence="3">Present with 5150 molecules/cell in log phase SD medium.</text>
</comment>
<comment type="similarity">
    <text evidence="7">Belongs to the RNase PH family.</text>
</comment>
<comment type="caution">
    <text evidence="8">Was originally thought to have exonuclease activity but it was later shown (PubMed:17173052, PubMed:17174896) that only DIS3/RRP44 subunit of the exosome core has this activity.</text>
</comment>
<name>RRP41_YEAST</name>
<evidence type="ECO:0000269" key="1">
    <source>
    </source>
</evidence>
<evidence type="ECO:0000269" key="2">
    <source>
    </source>
</evidence>
<evidence type="ECO:0000269" key="3">
    <source>
    </source>
</evidence>
<evidence type="ECO:0000269" key="4">
    <source>
    </source>
</evidence>
<evidence type="ECO:0000269" key="5">
    <source>
    </source>
</evidence>
<evidence type="ECO:0000269" key="6">
    <source>
    </source>
</evidence>
<evidence type="ECO:0000305" key="7"/>
<evidence type="ECO:0000305" key="8">
    <source>
    </source>
</evidence>
<evidence type="ECO:0007829" key="9">
    <source>
        <dbReference type="PDB" id="4OO1"/>
    </source>
</evidence>
<evidence type="ECO:0007829" key="10">
    <source>
        <dbReference type="PDB" id="5JEA"/>
    </source>
</evidence>
<reference key="1">
    <citation type="journal article" date="1995" name="Yeast">
        <title>The complete sequence of a 9000 bp fragment of the right arm of Saccharomyces cerevisiae chromosome VII contains four previously unknown open reading frames.</title>
        <authorList>
            <person name="Guerreiro P."/>
            <person name="Maia e Silva A."/>
            <person name="Barreiros T."/>
            <person name="Arroyo J."/>
            <person name="Garcia-Gonzalez M."/>
            <person name="Garcia-Saez M.I."/>
            <person name="Rodrigues-Pousada C."/>
            <person name="Nombela C."/>
        </authorList>
    </citation>
    <scope>NUCLEOTIDE SEQUENCE [GENOMIC DNA]</scope>
    <source>
        <strain>ATCC 204508 / S288c</strain>
    </source>
</reference>
<reference key="2">
    <citation type="journal article" date="1997" name="Nature">
        <title>The nucleotide sequence of Saccharomyces cerevisiae chromosome VII.</title>
        <authorList>
            <person name="Tettelin H."/>
            <person name="Agostoni-Carbone M.L."/>
            <person name="Albermann K."/>
            <person name="Albers M."/>
            <person name="Arroyo J."/>
            <person name="Backes U."/>
            <person name="Barreiros T."/>
            <person name="Bertani I."/>
            <person name="Bjourson A.J."/>
            <person name="Brueckner M."/>
            <person name="Bruschi C.V."/>
            <person name="Carignani G."/>
            <person name="Castagnoli L."/>
            <person name="Cerdan E."/>
            <person name="Clemente M.L."/>
            <person name="Coblenz A."/>
            <person name="Coglievina M."/>
            <person name="Coissac E."/>
            <person name="Defoor E."/>
            <person name="Del Bino S."/>
            <person name="Delius H."/>
            <person name="Delneri D."/>
            <person name="de Wergifosse P."/>
            <person name="Dujon B."/>
            <person name="Durand P."/>
            <person name="Entian K.-D."/>
            <person name="Eraso P."/>
            <person name="Escribano V."/>
            <person name="Fabiani L."/>
            <person name="Fartmann B."/>
            <person name="Feroli F."/>
            <person name="Feuermann M."/>
            <person name="Frontali L."/>
            <person name="Garcia-Gonzalez M."/>
            <person name="Garcia-Saez M.I."/>
            <person name="Goffeau A."/>
            <person name="Guerreiro P."/>
            <person name="Hani J."/>
            <person name="Hansen M."/>
            <person name="Hebling U."/>
            <person name="Hernandez K."/>
            <person name="Heumann K."/>
            <person name="Hilger F."/>
            <person name="Hofmann B."/>
            <person name="Indge K.J."/>
            <person name="James C.M."/>
            <person name="Klima R."/>
            <person name="Koetter P."/>
            <person name="Kramer B."/>
            <person name="Kramer W."/>
            <person name="Lauquin G."/>
            <person name="Leuther H."/>
            <person name="Louis E.J."/>
            <person name="Maillier E."/>
            <person name="Marconi A."/>
            <person name="Martegani E."/>
            <person name="Mazon M.J."/>
            <person name="Mazzoni C."/>
            <person name="McReynolds A.D.K."/>
            <person name="Melchioretto P."/>
            <person name="Mewes H.-W."/>
            <person name="Minenkova O."/>
            <person name="Mueller-Auer S."/>
            <person name="Nawrocki A."/>
            <person name="Netter P."/>
            <person name="Neu R."/>
            <person name="Nombela C."/>
            <person name="Oliver S.G."/>
            <person name="Panzeri L."/>
            <person name="Paoluzi S."/>
            <person name="Plevani P."/>
            <person name="Portetelle D."/>
            <person name="Portillo F."/>
            <person name="Potier S."/>
            <person name="Purnelle B."/>
            <person name="Rieger M."/>
            <person name="Riles L."/>
            <person name="Rinaldi T."/>
            <person name="Robben J."/>
            <person name="Rodrigues-Pousada C."/>
            <person name="Rodriguez-Belmonte E."/>
            <person name="Rodriguez-Torres A.M."/>
            <person name="Rose M."/>
            <person name="Ruzzi M."/>
            <person name="Saliola M."/>
            <person name="Sanchez-Perez M."/>
            <person name="Schaefer B."/>
            <person name="Schaefer M."/>
            <person name="Scharfe M."/>
            <person name="Schmidheini T."/>
            <person name="Schreer A."/>
            <person name="Skala J."/>
            <person name="Souciet J.-L."/>
            <person name="Steensma H.Y."/>
            <person name="Talla E."/>
            <person name="Thierry A."/>
            <person name="Vandenbol M."/>
            <person name="van der Aart Q.J.M."/>
            <person name="Van Dyck L."/>
            <person name="Vanoni M."/>
            <person name="Verhasselt P."/>
            <person name="Voet M."/>
            <person name="Volckaert G."/>
            <person name="Wambutt R."/>
            <person name="Watson M.D."/>
            <person name="Weber N."/>
            <person name="Wedler E."/>
            <person name="Wedler H."/>
            <person name="Wipfli P."/>
            <person name="Wolf K."/>
            <person name="Wright L.F."/>
            <person name="Zaccaria P."/>
            <person name="Zimmermann M."/>
            <person name="Zollner A."/>
            <person name="Kleine K."/>
        </authorList>
    </citation>
    <scope>NUCLEOTIDE SEQUENCE [LARGE SCALE GENOMIC DNA]</scope>
    <source>
        <strain>ATCC 204508 / S288c</strain>
    </source>
</reference>
<reference key="3">
    <citation type="journal article" date="2014" name="G3 (Bethesda)">
        <title>The reference genome sequence of Saccharomyces cerevisiae: Then and now.</title>
        <authorList>
            <person name="Engel S.R."/>
            <person name="Dietrich F.S."/>
            <person name="Fisk D.G."/>
            <person name="Binkley G."/>
            <person name="Balakrishnan R."/>
            <person name="Costanzo M.C."/>
            <person name="Dwight S.S."/>
            <person name="Hitz B.C."/>
            <person name="Karra K."/>
            <person name="Nash R.S."/>
            <person name="Weng S."/>
            <person name="Wong E.D."/>
            <person name="Lloyd P."/>
            <person name="Skrzypek M.S."/>
            <person name="Miyasato S.R."/>
            <person name="Simison M."/>
            <person name="Cherry J.M."/>
        </authorList>
    </citation>
    <scope>GENOME REANNOTATION</scope>
    <source>
        <strain>ATCC 204508 / S288c</strain>
    </source>
</reference>
<reference key="4">
    <citation type="journal article" date="2007" name="Genome Res.">
        <title>Approaching a complete repository of sequence-verified protein-encoding clones for Saccharomyces cerevisiae.</title>
        <authorList>
            <person name="Hu Y."/>
            <person name="Rolfs A."/>
            <person name="Bhullar B."/>
            <person name="Murthy T.V.S."/>
            <person name="Zhu C."/>
            <person name="Berger M.F."/>
            <person name="Camargo A.A."/>
            <person name="Kelley F."/>
            <person name="McCarron S."/>
            <person name="Jepson D."/>
            <person name="Richardson A."/>
            <person name="Raphael J."/>
            <person name="Moreira D."/>
            <person name="Taycher E."/>
            <person name="Zuo D."/>
            <person name="Mohr S."/>
            <person name="Kane M.F."/>
            <person name="Williamson J."/>
            <person name="Simpson A.J.G."/>
            <person name="Bulyk M.L."/>
            <person name="Harlow E."/>
            <person name="Marsischky G."/>
            <person name="Kolodner R.D."/>
            <person name="LaBaer J."/>
        </authorList>
    </citation>
    <scope>NUCLEOTIDE SEQUENCE [GENOMIC DNA]</scope>
    <source>
        <strain>ATCC 204508 / S288c</strain>
    </source>
</reference>
<reference key="5">
    <citation type="journal article" date="1997" name="Cell">
        <title>The exosome: a conserved eukaryotic RNA processing complex containing multiple 3'--&gt;5' exoribonucleases.</title>
        <authorList>
            <person name="Mitchell P."/>
            <person name="Petfalski E."/>
            <person name="Shevchenko A."/>
            <person name="Mann M."/>
            <person name="Tollervey D."/>
        </authorList>
    </citation>
    <scope>IDENTIFICATION BY MASS SPECTROMETRY</scope>
    <scope>FUNCTION</scope>
    <scope>SUBUNIT</scope>
</reference>
<reference key="6">
    <citation type="journal article" date="1999" name="Genes Dev.">
        <title>The yeast exosome and human PM-Scl are related complexes of 3'--&gt;5' exonucleases.</title>
        <authorList>
            <person name="Allmang C."/>
            <person name="Petfalski E."/>
            <person name="Podtelejnikov A."/>
            <person name="Mann M."/>
            <person name="Tollervey D."/>
            <person name="Mitchell P."/>
        </authorList>
    </citation>
    <scope>IDENTIFICATION IN THE RNA EXOSOME COMPLEX BY MASS SPECTROMETRY</scope>
</reference>
<reference key="7">
    <citation type="journal article" date="2003" name="Nature">
        <title>Global analysis of protein localization in budding yeast.</title>
        <authorList>
            <person name="Huh W.-K."/>
            <person name="Falvo J.V."/>
            <person name="Gerke L.C."/>
            <person name="Carroll A.S."/>
            <person name="Howson R.W."/>
            <person name="Weissman J.S."/>
            <person name="O'Shea E.K."/>
        </authorList>
    </citation>
    <scope>SUBCELLULAR LOCATION [LARGE SCALE ANALYSIS]</scope>
</reference>
<reference key="8">
    <citation type="journal article" date="2003" name="Nature">
        <title>Global analysis of protein expression in yeast.</title>
        <authorList>
            <person name="Ghaemmaghami S."/>
            <person name="Huh W.-K."/>
            <person name="Bower K."/>
            <person name="Howson R.W."/>
            <person name="Belle A."/>
            <person name="Dephoure N."/>
            <person name="O'Shea E.K."/>
            <person name="Weissman J.S."/>
        </authorList>
    </citation>
    <scope>LEVEL OF PROTEIN EXPRESSION [LARGE SCALE ANALYSIS]</scope>
</reference>
<reference key="9">
    <citation type="journal article" date="2006" name="Cell">
        <title>Reconstitution, activities, and structure of the eukaryotic RNA exosome.</title>
        <authorList>
            <person name="Liu Q."/>
            <person name="Greimann J.C."/>
            <person name="Lima C.D."/>
        </authorList>
    </citation>
    <scope>RECONSTITUTION OF THE RNA EXOSOME COMPLEX</scope>
    <scope>LACK OF EXONUCLEASE ACTIVITY</scope>
</reference>
<reference key="10">
    <citation type="journal article" date="2007" name="Cell">
        <authorList>
            <person name="Liu Q."/>
            <person name="Greimann J.C."/>
            <person name="Lima C.D."/>
        </authorList>
    </citation>
    <scope>ERRATUM OF PUBMED:17174896</scope>
</reference>
<reference key="11">
    <citation type="journal article" date="2007" name="Nat. Struct. Mol. Biol.">
        <title>A single subunit, Dis3, is essentially responsible for yeast exosome core activity.</title>
        <authorList>
            <person name="Dziembowski A."/>
            <person name="Lorentzen E."/>
            <person name="Conti E."/>
            <person name="Seraphin B."/>
        </authorList>
    </citation>
    <scope>IDENTIFICATION BY MASS SPECTROMETRY</scope>
    <scope>FUNCTION OF THE RNA EXOSOME COMPLEX</scope>
    <scope>SUBUNIT</scope>
</reference>
<reference key="12">
    <citation type="journal article" date="2009" name="Cell">
        <title>The yeast exosome functions as a macromolecular cage to channel RNA substrates for degradation.</title>
        <authorList>
            <person name="Bonneau F."/>
            <person name="Basquin J."/>
            <person name="Ebert J."/>
            <person name="Lorentzen E."/>
            <person name="Conti E."/>
        </authorList>
    </citation>
    <scope>X-RAY CRYSTALLOGRAPHY (3.0 ANGSTROMS) IN COMPLEX WITH RRP45 AND DIS3</scope>
    <scope>MUTAGENESIS OF 62-LYS-SER-63 AND 95-ARG-ARG-96</scope>
</reference>
<keyword id="KW-0002">3D-structure</keyword>
<keyword id="KW-0963">Cytoplasm</keyword>
<keyword id="KW-0271">Exosome</keyword>
<keyword id="KW-0539">Nucleus</keyword>
<keyword id="KW-1185">Reference proteome</keyword>
<keyword id="KW-0694">RNA-binding</keyword>
<keyword id="KW-0698">rRNA processing</keyword>